<dbReference type="EMBL" id="CR954199">
    <property type="protein sequence ID" value="CAL36348.1"/>
    <property type="molecule type" value="Genomic_DNA"/>
</dbReference>
<dbReference type="RefSeq" id="YP_717226.1">
    <property type="nucleotide sequence ID" value="NC_008289.1"/>
</dbReference>
<dbReference type="SMR" id="Q0P3M9"/>
<dbReference type="FunCoup" id="Q0P3M9">
    <property type="interactions" value="1034"/>
</dbReference>
<dbReference type="STRING" id="70448.Q0P3M9"/>
<dbReference type="GeneID" id="4238802"/>
<dbReference type="KEGG" id="ota:OstapCp23"/>
<dbReference type="eggNOG" id="KOG1750">
    <property type="taxonomic scope" value="Eukaryota"/>
</dbReference>
<dbReference type="InParanoid" id="Q0P3M9"/>
<dbReference type="Proteomes" id="UP000009170">
    <property type="component" value="Chloroplast"/>
</dbReference>
<dbReference type="GO" id="GO:0009507">
    <property type="term" value="C:chloroplast"/>
    <property type="evidence" value="ECO:0007669"/>
    <property type="project" value="UniProtKB-SubCell"/>
</dbReference>
<dbReference type="GO" id="GO:0015935">
    <property type="term" value="C:small ribosomal subunit"/>
    <property type="evidence" value="ECO:0007669"/>
    <property type="project" value="InterPro"/>
</dbReference>
<dbReference type="GO" id="GO:0019843">
    <property type="term" value="F:rRNA binding"/>
    <property type="evidence" value="ECO:0007669"/>
    <property type="project" value="UniProtKB-UniRule"/>
</dbReference>
<dbReference type="GO" id="GO:0003735">
    <property type="term" value="F:structural constituent of ribosome"/>
    <property type="evidence" value="ECO:0007669"/>
    <property type="project" value="InterPro"/>
</dbReference>
<dbReference type="GO" id="GO:0006412">
    <property type="term" value="P:translation"/>
    <property type="evidence" value="ECO:0007669"/>
    <property type="project" value="UniProtKB-UniRule"/>
</dbReference>
<dbReference type="CDD" id="cd03368">
    <property type="entry name" value="Ribosomal_S12"/>
    <property type="match status" value="1"/>
</dbReference>
<dbReference type="FunFam" id="2.40.50.140:FF:000001">
    <property type="entry name" value="30S ribosomal protein S12"/>
    <property type="match status" value="1"/>
</dbReference>
<dbReference type="Gene3D" id="2.40.50.140">
    <property type="entry name" value="Nucleic acid-binding proteins"/>
    <property type="match status" value="1"/>
</dbReference>
<dbReference type="HAMAP" id="MF_00403_B">
    <property type="entry name" value="Ribosomal_uS12_B"/>
    <property type="match status" value="1"/>
</dbReference>
<dbReference type="InterPro" id="IPR012340">
    <property type="entry name" value="NA-bd_OB-fold"/>
</dbReference>
<dbReference type="InterPro" id="IPR006032">
    <property type="entry name" value="Ribosomal_uS12"/>
</dbReference>
<dbReference type="InterPro" id="IPR005679">
    <property type="entry name" value="Ribosomal_uS12_bac"/>
</dbReference>
<dbReference type="NCBIfam" id="TIGR00981">
    <property type="entry name" value="rpsL_bact"/>
    <property type="match status" value="1"/>
</dbReference>
<dbReference type="PANTHER" id="PTHR11652">
    <property type="entry name" value="30S RIBOSOMAL PROTEIN S12 FAMILY MEMBER"/>
    <property type="match status" value="1"/>
</dbReference>
<dbReference type="Pfam" id="PF00164">
    <property type="entry name" value="Ribosom_S12_S23"/>
    <property type="match status" value="1"/>
</dbReference>
<dbReference type="PIRSF" id="PIRSF002133">
    <property type="entry name" value="Ribosomal_S12/S23"/>
    <property type="match status" value="1"/>
</dbReference>
<dbReference type="PRINTS" id="PR01034">
    <property type="entry name" value="RIBOSOMALS12"/>
</dbReference>
<dbReference type="SUPFAM" id="SSF50249">
    <property type="entry name" value="Nucleic acid-binding proteins"/>
    <property type="match status" value="1"/>
</dbReference>
<dbReference type="PROSITE" id="PS00055">
    <property type="entry name" value="RIBOSOMAL_S12"/>
    <property type="match status" value="1"/>
</dbReference>
<geneLocation type="chloroplast"/>
<reference key="1">
    <citation type="journal article" date="2007" name="Mol. Biol. Evol.">
        <title>The complete chloroplast and mitochondrial DNA sequence of Ostreococcus tauri: organelle genomes of the smallest eukaryote are examples of compaction.</title>
        <authorList>
            <person name="Robbens S."/>
            <person name="Derelle E."/>
            <person name="Ferraz C."/>
            <person name="Wuyts J."/>
            <person name="Moreau H."/>
            <person name="Van de Peer Y."/>
        </authorList>
    </citation>
    <scope>NUCLEOTIDE SEQUENCE [LARGE SCALE GENOMIC DNA]</scope>
    <source>
        <strain>OTTH0595</strain>
    </source>
</reference>
<keyword id="KW-0150">Chloroplast</keyword>
<keyword id="KW-0934">Plastid</keyword>
<keyword id="KW-1185">Reference proteome</keyword>
<keyword id="KW-0687">Ribonucleoprotein</keyword>
<keyword id="KW-0689">Ribosomal protein</keyword>
<keyword id="KW-0694">RNA-binding</keyword>
<keyword id="KW-0699">rRNA-binding</keyword>
<evidence type="ECO:0000250" key="1"/>
<evidence type="ECO:0000305" key="2"/>
<accession>Q0P3M9</accession>
<name>RR12_OSTTA</name>
<sequence length="124" mass="13829">MPTIQQLIRSQRIKCETKTKSPALKACPQRRGICTRVYTTTPKKPNSALRKVARVRLTTGIEVTAYIPGIGHNLQEHSVVLVRGGRVKDLPGVRYHIVRGSLDTAGVKDRLQSRSKYGVKRPKS</sequence>
<feature type="chain" id="PRO_0000276622" description="Small ribosomal subunit protein uS12c">
    <location>
        <begin position="1"/>
        <end position="124"/>
    </location>
</feature>
<comment type="function">
    <text evidence="1">With S4 and S5 plays an important role in translational accuracy. Located at the interface of the 30S and 50S subunits (By similarity).</text>
</comment>
<comment type="subunit">
    <text evidence="1">Part of the 30S ribosomal subunit.</text>
</comment>
<comment type="subcellular location">
    <subcellularLocation>
        <location>Plastid</location>
        <location>Chloroplast</location>
    </subcellularLocation>
</comment>
<comment type="similarity">
    <text evidence="2">Belongs to the universal ribosomal protein uS12 family.</text>
</comment>
<organism>
    <name type="scientific">Ostreococcus tauri</name>
    <dbReference type="NCBI Taxonomy" id="70448"/>
    <lineage>
        <taxon>Eukaryota</taxon>
        <taxon>Viridiplantae</taxon>
        <taxon>Chlorophyta</taxon>
        <taxon>Mamiellophyceae</taxon>
        <taxon>Mamiellales</taxon>
        <taxon>Bathycoccaceae</taxon>
        <taxon>Ostreococcus</taxon>
    </lineage>
</organism>
<proteinExistence type="inferred from homology"/>
<gene>
    <name type="primary">rps12</name>
    <name type="ordered locus">OtCpg00230</name>
</gene>
<protein>
    <recommendedName>
        <fullName evidence="2">Small ribosomal subunit protein uS12c</fullName>
    </recommendedName>
    <alternativeName>
        <fullName>30S ribosomal protein S12, chloroplastic</fullName>
    </alternativeName>
</protein>